<sequence length="108" mass="12532">MILQRLFRLSSAVQSAISVSWRRNIGITAVAFNKELDPVQKLFVDKIREYRTKRQTSGGPVDAGPEYQQDLDRELFKLKQMYGKADMNTFPNFTFEDPKFEVVEKPQS</sequence>
<comment type="function">
    <text evidence="1 2 7">Subunit F6, of the mitochondrial membrane ATP synthase complex (F(1)F(0) ATP synthase or Complex V) that produces ATP from ADP in the presence of a proton gradient across the membrane which is generated by electron transport complexes of the respiratory chain. ATP synthase complex consist of a soluble F(1) head domain - the catalytic core - and a membrane F(1) domain - the membrane proton channel. These two domains are linked by a central stalk rotating inside the F(1) region and a stationary peripheral stalk. During catalysis, ATP synthesis in the catalytic domain of F(1) is coupled via a rotary mechanism of the central stalk subunits to proton translocation (By similarity). In vivo, can only synthesize ATP although its ATP hydrolase activity can be activated artificially in vitro (By similarity). Part of the complex F(0) domain (By similarity). Part of the complex F(0) domain and the peripheric stalk, which acts as a stator to hold the catalytic alpha(3)beta(3) subcomplex and subunit a/ATP6 static relative to the rotary elements (PubMed:25851905).</text>
</comment>
<comment type="subunit">
    <text evidence="1 5 7">Component of the ATP synthase complex composed at least of ATP5F1A/subunit alpha, ATP5F1B/subunit beta, ATP5MC1/subunit c (homooctomer), MT-ATP6/subunit a, MT-ATP8/subunit 8, ATP5ME/subunit e, ATP5MF/subunit f, ATP5MG/subunit g, ATP5MK/subunit k, ATP5MJ/subunit j, ATP5F1C/subunit gamma, ATP5F1D/subunit delta, ATP5F1E/subunit epsilon, ATP5PF/subunit F6, ATP5PB/subunit b, ATP5PD/subunit d, ATP5PO/subunit OSCP (PubMed:17570365, PubMed:25851905). ATP synthase complex consists of a soluble F(1) head domain (subunits alpha(3) and beta(3)) - the catalytic core - and a membrane F(0) domain - the membrane proton channel (subunits c, a, 8, e, f, g, k and j). These two domains are linked by a central stalk (subunits gamma, delta, and epsilon) rotating inside the F1 region and a stationary peripheral stalk (subunits F6, b, d, and OSCP) (By similarity).</text>
</comment>
<comment type="subcellular location">
    <subcellularLocation>
        <location>Mitochondrion</location>
    </subcellularLocation>
    <subcellularLocation>
        <location>Mitochondrion inner membrane</location>
    </subcellularLocation>
</comment>
<comment type="similarity">
    <text evidence="9">Belongs to the eukaryotic ATPase subunit F6 family.</text>
</comment>
<reference key="1">
    <citation type="journal article" date="1987" name="Biochemistry">
        <title>ATP synthase from bovine mitochondria: sequences of imported precursors of oligomycin sensitivity conferral protein, factor 6, and adenosinetriphosphatase inhibitor protein.</title>
        <authorList>
            <person name="Walker J.E."/>
            <person name="Gay N.J."/>
            <person name="Powell S.J."/>
            <person name="Kostina M."/>
            <person name="Dyer M.R."/>
        </authorList>
    </citation>
    <scope>NUCLEOTIDE SEQUENCE [MRNA]</scope>
</reference>
<reference key="2">
    <citation type="submission" date="2005-08" db="EMBL/GenBank/DDBJ databases">
        <authorList>
            <consortium name="NIH - Mammalian Gene Collection (MGC) project"/>
        </authorList>
    </citation>
    <scope>NUCLEOTIDE SEQUENCE [LARGE SCALE MRNA]</scope>
    <source>
        <strain>Crossbred X Angus</strain>
        <tissue>Ileum</tissue>
    </source>
</reference>
<reference key="3">
    <citation type="journal article" date="1984" name="Proc. Natl. Acad. Sci. U.S.A.">
        <title>Amino acid sequence of bovine heart coupling factor 6.</title>
        <authorList>
            <person name="Fang J.-K."/>
            <person name="Jacobs J.W."/>
            <person name="Kanner B.I."/>
            <person name="Racker R."/>
            <person name="Bradshaw R.A."/>
        </authorList>
    </citation>
    <scope>PROTEIN SEQUENCE OF 33-108</scope>
</reference>
<reference key="4">
    <citation type="journal article" date="1991" name="Biochemistry">
        <title>Identification of the subunits of F1F0-ATPase from bovine heart mitochondria.</title>
        <authorList>
            <person name="Walker J.E."/>
            <person name="Lutter R."/>
            <person name="Dupuis A."/>
            <person name="Runswick M.J."/>
        </authorList>
    </citation>
    <scope>PROTEIN SEQUENCE OF 33-37</scope>
    <source>
        <tissue>Heart</tissue>
    </source>
</reference>
<reference key="5">
    <citation type="journal article" date="2007" name="FEBS Lett.">
        <title>Association of two proteolipids of unknown function with ATP synthase from bovine heart mitochondria.</title>
        <authorList>
            <person name="Chen R."/>
            <person name="Runswick M.J."/>
            <person name="Carroll J."/>
            <person name="Fearnley I.M."/>
            <person name="Walker J.E."/>
        </authorList>
    </citation>
    <scope>IDENTIFICATION IN THE ATP SYNTHASE COMPLEX</scope>
</reference>
<reference key="6">
    <citation type="journal article" date="2015" name="J. Biol. Chem.">
        <title>Organization of Subunits in the Membrane Domain of the Bovine F-ATPase Revealed by Covalent Cross-linking.</title>
        <authorList>
            <person name="Lee J."/>
            <person name="Ding S."/>
            <person name="Walpole T.B."/>
            <person name="Holding A.N."/>
            <person name="Montgomery M.G."/>
            <person name="Fearnley I.M."/>
            <person name="Walker J.E."/>
        </authorList>
    </citation>
    <scope>IDENTIFICATION BY MASS SPECTROMETRY</scope>
    <scope>IDENTIFICATION IN THE ATP SYNTHASE COMPLEX</scope>
</reference>
<accession>P02721</accession>
<accession>Q3ZBD6</accession>
<dbReference type="EMBL" id="M19217">
    <property type="protein sequence ID" value="AAA30511.1"/>
    <property type="molecule type" value="mRNA"/>
</dbReference>
<dbReference type="EMBL" id="BC103429">
    <property type="protein sequence ID" value="AAI03430.1"/>
    <property type="molecule type" value="mRNA"/>
</dbReference>
<dbReference type="PIR" id="B27382">
    <property type="entry name" value="JLBO6"/>
</dbReference>
<dbReference type="RefSeq" id="NP_001415115.1">
    <property type="nucleotide sequence ID" value="NM_001428186.1"/>
</dbReference>
<dbReference type="RefSeq" id="NP_001415116.1">
    <property type="nucleotide sequence ID" value="NM_001428187.1"/>
</dbReference>
<dbReference type="RefSeq" id="NP_001415117.1">
    <property type="nucleotide sequence ID" value="NM_001428188.1"/>
</dbReference>
<dbReference type="RefSeq" id="NP_001415118.1">
    <property type="nucleotide sequence ID" value="NM_001428189.1"/>
</dbReference>
<dbReference type="RefSeq" id="NP_777142.1">
    <property type="nucleotide sequence ID" value="NM_174717.4"/>
</dbReference>
<dbReference type="RefSeq" id="XP_005201201.1">
    <property type="nucleotide sequence ID" value="XM_005201144.3"/>
</dbReference>
<dbReference type="RefSeq" id="XP_005201202.1">
    <property type="nucleotide sequence ID" value="XM_005201145.3"/>
</dbReference>
<dbReference type="RefSeq" id="XP_005201203.1">
    <property type="nucleotide sequence ID" value="XM_005201146.3"/>
</dbReference>
<dbReference type="RefSeq" id="XP_010799229.1">
    <property type="nucleotide sequence ID" value="XM_010800927.1"/>
</dbReference>
<dbReference type="PDB" id="1VZS">
    <property type="method" value="NMR"/>
    <property type="chains" value="A=33-108"/>
</dbReference>
<dbReference type="PDB" id="2CLY">
    <property type="method" value="X-ray"/>
    <property type="resolution" value="2.80 A"/>
    <property type="chains" value="C/F=32-108"/>
</dbReference>
<dbReference type="PDB" id="2WSS">
    <property type="method" value="X-ray"/>
    <property type="resolution" value="3.20 A"/>
    <property type="chains" value="V/Z=33-108"/>
</dbReference>
<dbReference type="PDB" id="4B2Q">
    <property type="method" value="EM"/>
    <property type="resolution" value="37.00 A"/>
    <property type="chains" value="V/v=36-101"/>
</dbReference>
<dbReference type="PDB" id="5ARA">
    <property type="method" value="EM"/>
    <property type="resolution" value="6.70 A"/>
    <property type="chains" value="V=32-108"/>
</dbReference>
<dbReference type="PDB" id="5ARE">
    <property type="method" value="EM"/>
    <property type="resolution" value="7.40 A"/>
    <property type="chains" value="V=32-108"/>
</dbReference>
<dbReference type="PDB" id="5ARH">
    <property type="method" value="EM"/>
    <property type="resolution" value="7.20 A"/>
    <property type="chains" value="V=32-108"/>
</dbReference>
<dbReference type="PDB" id="5ARI">
    <property type="method" value="EM"/>
    <property type="resolution" value="7.40 A"/>
    <property type="chains" value="V=32-108"/>
</dbReference>
<dbReference type="PDB" id="5FIJ">
    <property type="method" value="EM"/>
    <property type="resolution" value="7.40 A"/>
    <property type="chains" value="V=32-108"/>
</dbReference>
<dbReference type="PDB" id="5FIK">
    <property type="method" value="EM"/>
    <property type="resolution" value="6.40 A"/>
    <property type="chains" value="V=32-108"/>
</dbReference>
<dbReference type="PDB" id="5FIL">
    <property type="method" value="EM"/>
    <property type="resolution" value="7.10 A"/>
    <property type="chains" value="V=32-108"/>
</dbReference>
<dbReference type="PDB" id="6YY0">
    <property type="method" value="EM"/>
    <property type="resolution" value="3.23 A"/>
    <property type="chains" value="h=33-108"/>
</dbReference>
<dbReference type="PDB" id="6Z1R">
    <property type="method" value="EM"/>
    <property type="resolution" value="3.29 A"/>
    <property type="chains" value="h=33-108"/>
</dbReference>
<dbReference type="PDB" id="6Z1U">
    <property type="method" value="EM"/>
    <property type="resolution" value="3.47 A"/>
    <property type="chains" value="h=33-108"/>
</dbReference>
<dbReference type="PDB" id="6ZIQ">
    <property type="method" value="EM"/>
    <property type="resolution" value="4.33 A"/>
    <property type="chains" value="h=33-108"/>
</dbReference>
<dbReference type="PDB" id="6ZIT">
    <property type="method" value="EM"/>
    <property type="resolution" value="3.49 A"/>
    <property type="chains" value="h=33-108"/>
</dbReference>
<dbReference type="PDB" id="6ZIU">
    <property type="method" value="EM"/>
    <property type="resolution" value="6.02 A"/>
    <property type="chains" value="h=33-108"/>
</dbReference>
<dbReference type="PDB" id="6ZPO">
    <property type="method" value="EM"/>
    <property type="resolution" value="4.00 A"/>
    <property type="chains" value="h=33-108"/>
</dbReference>
<dbReference type="PDB" id="6ZQM">
    <property type="method" value="EM"/>
    <property type="resolution" value="3.29 A"/>
    <property type="chains" value="h=33-108"/>
</dbReference>
<dbReference type="PDB" id="6ZQN">
    <property type="method" value="EM"/>
    <property type="resolution" value="4.00 A"/>
    <property type="chains" value="h=33-108"/>
</dbReference>
<dbReference type="PDB" id="7AJB">
    <property type="method" value="EM"/>
    <property type="resolution" value="9.20 A"/>
    <property type="chains" value="Ah/h=33-108"/>
</dbReference>
<dbReference type="PDB" id="7AJC">
    <property type="method" value="EM"/>
    <property type="resolution" value="11.90 A"/>
    <property type="chains" value="Ah/h=33-108"/>
</dbReference>
<dbReference type="PDB" id="7AJD">
    <property type="method" value="EM"/>
    <property type="resolution" value="9.00 A"/>
    <property type="chains" value="Ah/h=33-108"/>
</dbReference>
<dbReference type="PDB" id="7AJE">
    <property type="method" value="EM"/>
    <property type="resolution" value="9.40 A"/>
    <property type="chains" value="Ah/h=33-108"/>
</dbReference>
<dbReference type="PDB" id="7AJF">
    <property type="method" value="EM"/>
    <property type="resolution" value="8.45 A"/>
    <property type="chains" value="Ah/h=33-108"/>
</dbReference>
<dbReference type="PDB" id="7AJG">
    <property type="method" value="EM"/>
    <property type="resolution" value="10.70 A"/>
    <property type="chains" value="Ah/h=33-108"/>
</dbReference>
<dbReference type="PDB" id="7AJH">
    <property type="method" value="EM"/>
    <property type="resolution" value="9.70 A"/>
    <property type="chains" value="Ah/h=33-108"/>
</dbReference>
<dbReference type="PDB" id="7AJI">
    <property type="method" value="EM"/>
    <property type="resolution" value="11.40 A"/>
    <property type="chains" value="Ah/h=33-108"/>
</dbReference>
<dbReference type="PDB" id="7AJJ">
    <property type="method" value="EM"/>
    <property type="resolution" value="13.10 A"/>
    <property type="chains" value="Ah/h=33-108"/>
</dbReference>
<dbReference type="PDBsum" id="1VZS"/>
<dbReference type="PDBsum" id="2CLY"/>
<dbReference type="PDBsum" id="2WSS"/>
<dbReference type="PDBsum" id="4B2Q"/>
<dbReference type="PDBsum" id="5ARA"/>
<dbReference type="PDBsum" id="5ARE"/>
<dbReference type="PDBsum" id="5ARH"/>
<dbReference type="PDBsum" id="5ARI"/>
<dbReference type="PDBsum" id="5FIJ"/>
<dbReference type="PDBsum" id="5FIK"/>
<dbReference type="PDBsum" id="5FIL"/>
<dbReference type="PDBsum" id="6YY0"/>
<dbReference type="PDBsum" id="6Z1R"/>
<dbReference type="PDBsum" id="6Z1U"/>
<dbReference type="PDBsum" id="6ZIQ"/>
<dbReference type="PDBsum" id="6ZIT"/>
<dbReference type="PDBsum" id="6ZIU"/>
<dbReference type="PDBsum" id="6ZPO"/>
<dbReference type="PDBsum" id="6ZQM"/>
<dbReference type="PDBsum" id="6ZQN"/>
<dbReference type="PDBsum" id="7AJB"/>
<dbReference type="PDBsum" id="7AJC"/>
<dbReference type="PDBsum" id="7AJD"/>
<dbReference type="PDBsum" id="7AJE"/>
<dbReference type="PDBsum" id="7AJF"/>
<dbReference type="PDBsum" id="7AJG"/>
<dbReference type="PDBsum" id="7AJH"/>
<dbReference type="PDBsum" id="7AJI"/>
<dbReference type="PDBsum" id="7AJJ"/>
<dbReference type="BMRB" id="P02721"/>
<dbReference type="EMDB" id="EMD-11001"/>
<dbReference type="EMDB" id="EMD-11039"/>
<dbReference type="EMDB" id="EMD-11040"/>
<dbReference type="EMDB" id="EMD-11228"/>
<dbReference type="EMDB" id="EMD-11229"/>
<dbReference type="EMDB" id="EMD-11230"/>
<dbReference type="EMDB" id="EMD-11342"/>
<dbReference type="EMDB" id="EMD-11368"/>
<dbReference type="EMDB" id="EMD-11369"/>
<dbReference type="EMDB" id="EMD-11428"/>
<dbReference type="EMDB" id="EMD-11429"/>
<dbReference type="EMDB" id="EMD-11430"/>
<dbReference type="SMR" id="P02721"/>
<dbReference type="CORUM" id="P02721"/>
<dbReference type="DIP" id="DIP-39023N"/>
<dbReference type="FunCoup" id="P02721">
    <property type="interactions" value="1567"/>
</dbReference>
<dbReference type="IntAct" id="P02721">
    <property type="interactions" value="2"/>
</dbReference>
<dbReference type="MINT" id="P02721"/>
<dbReference type="STRING" id="9913.ENSBTAP00000032359"/>
<dbReference type="PaxDb" id="9913-ENSBTAP00000032359"/>
<dbReference type="PeptideAtlas" id="P02721"/>
<dbReference type="GeneID" id="282690"/>
<dbReference type="KEGG" id="bta:282690"/>
<dbReference type="CTD" id="522"/>
<dbReference type="VEuPathDB" id="HostDB:ENSBTAG00000000605"/>
<dbReference type="eggNOG" id="KOG4634">
    <property type="taxonomic scope" value="Eukaryota"/>
</dbReference>
<dbReference type="HOGENOM" id="CLU_145649_1_0_1"/>
<dbReference type="InParanoid" id="P02721"/>
<dbReference type="OrthoDB" id="8902296at2759"/>
<dbReference type="TreeFam" id="TF318998"/>
<dbReference type="Reactome" id="R-BTA-163210">
    <property type="pathway name" value="Formation of ATP by chemiosmotic coupling"/>
</dbReference>
<dbReference type="Reactome" id="R-BTA-8949613">
    <property type="pathway name" value="Cristae formation"/>
</dbReference>
<dbReference type="Reactome" id="R-BTA-9837999">
    <property type="pathway name" value="Mitochondrial protein degradation"/>
</dbReference>
<dbReference type="EvolutionaryTrace" id="P02721"/>
<dbReference type="Proteomes" id="UP000009136">
    <property type="component" value="Chromosome 1"/>
</dbReference>
<dbReference type="Bgee" id="ENSBTAG00000000605">
    <property type="expression patterns" value="Expressed in oocyte and 104 other cell types or tissues"/>
</dbReference>
<dbReference type="GO" id="GO:0005743">
    <property type="term" value="C:mitochondrial inner membrane"/>
    <property type="evidence" value="ECO:0007669"/>
    <property type="project" value="UniProtKB-SubCell"/>
</dbReference>
<dbReference type="GO" id="GO:0005739">
    <property type="term" value="C:mitochondrion"/>
    <property type="evidence" value="ECO:0000305"/>
    <property type="project" value="UniProtKB"/>
</dbReference>
<dbReference type="GO" id="GO:0045259">
    <property type="term" value="C:proton-transporting ATP synthase complex"/>
    <property type="evidence" value="ECO:0000314"/>
    <property type="project" value="UniProtKB"/>
</dbReference>
<dbReference type="GO" id="GO:0015078">
    <property type="term" value="F:proton transmembrane transporter activity"/>
    <property type="evidence" value="ECO:0007669"/>
    <property type="project" value="InterPro"/>
</dbReference>
<dbReference type="GO" id="GO:0015986">
    <property type="term" value="P:proton motive force-driven ATP synthesis"/>
    <property type="evidence" value="ECO:0007669"/>
    <property type="project" value="InterPro"/>
</dbReference>
<dbReference type="DisProt" id="DP00201"/>
<dbReference type="FunFam" id="1.10.246.110:FF:000001">
    <property type="entry name" value="ATP synthase-coupling factor 6, mitochondrial"/>
    <property type="match status" value="1"/>
</dbReference>
<dbReference type="Gene3D" id="1.10.246.110">
    <property type="entry name" value="Mitochondrial ATP synthase-coupling factor 6"/>
    <property type="match status" value="1"/>
</dbReference>
<dbReference type="InterPro" id="IPR008387">
    <property type="entry name" value="ATP_synth_f6_mt"/>
</dbReference>
<dbReference type="InterPro" id="IPR036204">
    <property type="entry name" value="ATP_synth_f6_sf_mt"/>
</dbReference>
<dbReference type="PANTHER" id="PTHR12441">
    <property type="entry name" value="ATP SYNTHASE COUPLING FACTOR 6, MITOCHONDRIAL"/>
    <property type="match status" value="1"/>
</dbReference>
<dbReference type="PANTHER" id="PTHR12441:SF10">
    <property type="entry name" value="ATP SYNTHASE-COUPLING FACTOR 6, MITOCHONDRIAL"/>
    <property type="match status" value="1"/>
</dbReference>
<dbReference type="Pfam" id="PF05511">
    <property type="entry name" value="ATP-synt_F6"/>
    <property type="match status" value="1"/>
</dbReference>
<dbReference type="PIRSF" id="PIRSF002455">
    <property type="entry name" value="ATP_synthase_coupling_factor_6"/>
    <property type="match status" value="1"/>
</dbReference>
<dbReference type="SUPFAM" id="SSF111357">
    <property type="entry name" value="Mitochondrial ATP synthase coupling factor 6"/>
    <property type="match status" value="1"/>
</dbReference>
<organism>
    <name type="scientific">Bos taurus</name>
    <name type="common">Bovine</name>
    <dbReference type="NCBI Taxonomy" id="9913"/>
    <lineage>
        <taxon>Eukaryota</taxon>
        <taxon>Metazoa</taxon>
        <taxon>Chordata</taxon>
        <taxon>Craniata</taxon>
        <taxon>Vertebrata</taxon>
        <taxon>Euteleostomi</taxon>
        <taxon>Mammalia</taxon>
        <taxon>Eutheria</taxon>
        <taxon>Laurasiatheria</taxon>
        <taxon>Artiodactyla</taxon>
        <taxon>Ruminantia</taxon>
        <taxon>Pecora</taxon>
        <taxon>Bovidae</taxon>
        <taxon>Bovinae</taxon>
        <taxon>Bos</taxon>
    </lineage>
</organism>
<gene>
    <name evidence="1" type="primary">ATP5PF</name>
    <name type="synonym">ATP5J</name>
</gene>
<feature type="transit peptide" description="Mitochondrion" evidence="6 8">
    <location>
        <begin position="1"/>
        <end position="32"/>
    </location>
</feature>
<feature type="chain" id="PRO_0000002526" description="ATP synthase peripheral stalk subunit F6, mitochondrial">
    <location>
        <begin position="33"/>
        <end position="108"/>
    </location>
</feature>
<feature type="modified residue" description="N6-acetyllysine" evidence="1">
    <location>
        <position position="41"/>
    </location>
</feature>
<feature type="modified residue" description="N6-acetyllysine" evidence="1">
    <location>
        <position position="46"/>
    </location>
</feature>
<feature type="modified residue" description="N6-acetyllysine" evidence="4">
    <location>
        <position position="79"/>
    </location>
</feature>
<feature type="modified residue" description="N6-acetyllysine; alternate" evidence="4">
    <location>
        <position position="84"/>
    </location>
</feature>
<feature type="modified residue" description="N6-succinyllysine; alternate" evidence="4">
    <location>
        <position position="84"/>
    </location>
</feature>
<feature type="modified residue" description="N6-acetyllysine; alternate" evidence="1">
    <location>
        <position position="99"/>
    </location>
</feature>
<feature type="modified residue" description="N6-succinyllysine; alternate" evidence="4">
    <location>
        <position position="99"/>
    </location>
</feature>
<feature type="modified residue" description="N6-acetyllysine" evidence="1">
    <location>
        <position position="105"/>
    </location>
</feature>
<feature type="modified residue" description="Phosphoserine" evidence="3">
    <location>
        <position position="108"/>
    </location>
</feature>
<feature type="sequence conflict" description="In Ref. 3; AA sequence." evidence="9" ref="3">
    <original>T</original>
    <variation>F</variation>
    <location>
        <position position="94"/>
    </location>
</feature>
<feature type="helix" evidence="11">
    <location>
        <begin position="38"/>
        <end position="40"/>
    </location>
</feature>
<feature type="helix" evidence="11">
    <location>
        <begin position="41"/>
        <end position="54"/>
    </location>
</feature>
<feature type="strand" evidence="11">
    <location>
        <begin position="58"/>
        <end position="62"/>
    </location>
</feature>
<feature type="helix" evidence="11">
    <location>
        <begin position="66"/>
        <end position="82"/>
    </location>
</feature>
<feature type="strand" evidence="10">
    <location>
        <begin position="95"/>
        <end position="97"/>
    </location>
</feature>
<feature type="helix" evidence="10">
    <location>
        <begin position="98"/>
        <end position="100"/>
    </location>
</feature>
<keyword id="KW-0002">3D-structure</keyword>
<keyword id="KW-0007">Acetylation</keyword>
<keyword id="KW-0138">CF(0)</keyword>
<keyword id="KW-0903">Direct protein sequencing</keyword>
<keyword id="KW-0375">Hydrogen ion transport</keyword>
<keyword id="KW-0406">Ion transport</keyword>
<keyword id="KW-0472">Membrane</keyword>
<keyword id="KW-0496">Mitochondrion</keyword>
<keyword id="KW-0999">Mitochondrion inner membrane</keyword>
<keyword id="KW-0597">Phosphoprotein</keyword>
<keyword id="KW-1185">Reference proteome</keyword>
<keyword id="KW-0809">Transit peptide</keyword>
<keyword id="KW-0813">Transport</keyword>
<name>ATP5J_BOVIN</name>
<protein>
    <recommendedName>
        <fullName evidence="1">ATP synthase peripheral stalk subunit F6, mitochondrial</fullName>
        <shortName>ATPase subunit F6</shortName>
    </recommendedName>
    <alternativeName>
        <fullName evidence="9">ATP synthase peripheral stalk subunit F6</fullName>
    </alternativeName>
</protein>
<proteinExistence type="evidence at protein level"/>
<evidence type="ECO:0000250" key="1">
    <source>
        <dbReference type="UniProtKB" id="P18859"/>
    </source>
</evidence>
<evidence type="ECO:0000250" key="2">
    <source>
        <dbReference type="UniProtKB" id="P19483"/>
    </source>
</evidence>
<evidence type="ECO:0000250" key="3">
    <source>
        <dbReference type="UniProtKB" id="P21571"/>
    </source>
</evidence>
<evidence type="ECO:0000250" key="4">
    <source>
        <dbReference type="UniProtKB" id="P97450"/>
    </source>
</evidence>
<evidence type="ECO:0000269" key="5">
    <source>
    </source>
</evidence>
<evidence type="ECO:0000269" key="6">
    <source>
    </source>
</evidence>
<evidence type="ECO:0000269" key="7">
    <source>
    </source>
</evidence>
<evidence type="ECO:0000269" key="8">
    <source>
    </source>
</evidence>
<evidence type="ECO:0000305" key="9"/>
<evidence type="ECO:0007829" key="10">
    <source>
        <dbReference type="PDB" id="1VZS"/>
    </source>
</evidence>
<evidence type="ECO:0007829" key="11">
    <source>
        <dbReference type="PDB" id="2CLY"/>
    </source>
</evidence>